<comment type="catalytic activity">
    <reaction evidence="1">
        <text>tRNA(Leu) + L-leucine + ATP = L-leucyl-tRNA(Leu) + AMP + diphosphate</text>
        <dbReference type="Rhea" id="RHEA:11688"/>
        <dbReference type="Rhea" id="RHEA-COMP:9613"/>
        <dbReference type="Rhea" id="RHEA-COMP:9622"/>
        <dbReference type="ChEBI" id="CHEBI:30616"/>
        <dbReference type="ChEBI" id="CHEBI:33019"/>
        <dbReference type="ChEBI" id="CHEBI:57427"/>
        <dbReference type="ChEBI" id="CHEBI:78442"/>
        <dbReference type="ChEBI" id="CHEBI:78494"/>
        <dbReference type="ChEBI" id="CHEBI:456215"/>
        <dbReference type="EC" id="6.1.1.4"/>
    </reaction>
</comment>
<comment type="subcellular location">
    <subcellularLocation>
        <location evidence="1">Cytoplasm</location>
    </subcellularLocation>
</comment>
<comment type="similarity">
    <text evidence="1">Belongs to the class-I aminoacyl-tRNA synthetase family.</text>
</comment>
<feature type="chain" id="PRO_1000074832" description="Leucine--tRNA ligase">
    <location>
        <begin position="1"/>
        <end position="860"/>
    </location>
</feature>
<feature type="short sequence motif" description="'HIGH' region">
    <location>
        <begin position="42"/>
        <end position="52"/>
    </location>
</feature>
<feature type="short sequence motif" description="'KMSKS' region">
    <location>
        <begin position="619"/>
        <end position="623"/>
    </location>
</feature>
<feature type="binding site" evidence="1">
    <location>
        <position position="622"/>
    </location>
    <ligand>
        <name>ATP</name>
        <dbReference type="ChEBI" id="CHEBI:30616"/>
    </ligand>
</feature>
<protein>
    <recommendedName>
        <fullName evidence="1">Leucine--tRNA ligase</fullName>
        <ecNumber evidence="1">6.1.1.4</ecNumber>
    </recommendedName>
    <alternativeName>
        <fullName evidence="1">Leucyl-tRNA synthetase</fullName>
        <shortName evidence="1">LeuRS</shortName>
    </alternativeName>
</protein>
<evidence type="ECO:0000255" key="1">
    <source>
        <dbReference type="HAMAP-Rule" id="MF_00049"/>
    </source>
</evidence>
<keyword id="KW-0030">Aminoacyl-tRNA synthetase</keyword>
<keyword id="KW-0067">ATP-binding</keyword>
<keyword id="KW-0963">Cytoplasm</keyword>
<keyword id="KW-0436">Ligase</keyword>
<keyword id="KW-0547">Nucleotide-binding</keyword>
<keyword id="KW-0648">Protein biosynthesis</keyword>
<proteinExistence type="inferred from homology"/>
<gene>
    <name evidence="1" type="primary">leuS</name>
    <name type="ordered locus">EcolC_3003</name>
</gene>
<reference key="1">
    <citation type="submission" date="2008-02" db="EMBL/GenBank/DDBJ databases">
        <title>Complete sequence of Escherichia coli C str. ATCC 8739.</title>
        <authorList>
            <person name="Copeland A."/>
            <person name="Lucas S."/>
            <person name="Lapidus A."/>
            <person name="Glavina del Rio T."/>
            <person name="Dalin E."/>
            <person name="Tice H."/>
            <person name="Bruce D."/>
            <person name="Goodwin L."/>
            <person name="Pitluck S."/>
            <person name="Kiss H."/>
            <person name="Brettin T."/>
            <person name="Detter J.C."/>
            <person name="Han C."/>
            <person name="Kuske C.R."/>
            <person name="Schmutz J."/>
            <person name="Larimer F."/>
            <person name="Land M."/>
            <person name="Hauser L."/>
            <person name="Kyrpides N."/>
            <person name="Mikhailova N."/>
            <person name="Ingram L."/>
            <person name="Richardson P."/>
        </authorList>
    </citation>
    <scope>NUCLEOTIDE SEQUENCE [LARGE SCALE GENOMIC DNA]</scope>
    <source>
        <strain>ATCC 8739 / DSM 1576 / NBRC 3972 / NCIMB 8545 / WDCM 00012 / Crooks</strain>
    </source>
</reference>
<dbReference type="EC" id="6.1.1.4" evidence="1"/>
<dbReference type="EMBL" id="CP000946">
    <property type="protein sequence ID" value="ACA78628.1"/>
    <property type="molecule type" value="Genomic_DNA"/>
</dbReference>
<dbReference type="RefSeq" id="WP_001556475.1">
    <property type="nucleotide sequence ID" value="NZ_MTFT01000005.1"/>
</dbReference>
<dbReference type="SMR" id="B1IYG6"/>
<dbReference type="KEGG" id="ecl:EcolC_3003"/>
<dbReference type="HOGENOM" id="CLU_004427_0_0_6"/>
<dbReference type="GO" id="GO:0005829">
    <property type="term" value="C:cytosol"/>
    <property type="evidence" value="ECO:0007669"/>
    <property type="project" value="TreeGrafter"/>
</dbReference>
<dbReference type="GO" id="GO:0002161">
    <property type="term" value="F:aminoacyl-tRNA deacylase activity"/>
    <property type="evidence" value="ECO:0007669"/>
    <property type="project" value="InterPro"/>
</dbReference>
<dbReference type="GO" id="GO:0005524">
    <property type="term" value="F:ATP binding"/>
    <property type="evidence" value="ECO:0007669"/>
    <property type="project" value="UniProtKB-UniRule"/>
</dbReference>
<dbReference type="GO" id="GO:0004823">
    <property type="term" value="F:leucine-tRNA ligase activity"/>
    <property type="evidence" value="ECO:0007669"/>
    <property type="project" value="UniProtKB-UniRule"/>
</dbReference>
<dbReference type="GO" id="GO:0006429">
    <property type="term" value="P:leucyl-tRNA aminoacylation"/>
    <property type="evidence" value="ECO:0007669"/>
    <property type="project" value="UniProtKB-UniRule"/>
</dbReference>
<dbReference type="CDD" id="cd07958">
    <property type="entry name" value="Anticodon_Ia_Leu_BEm"/>
    <property type="match status" value="1"/>
</dbReference>
<dbReference type="CDD" id="cd00812">
    <property type="entry name" value="LeuRS_core"/>
    <property type="match status" value="1"/>
</dbReference>
<dbReference type="FunFam" id="1.10.730.10:FF:000002">
    <property type="entry name" value="Leucine--tRNA ligase"/>
    <property type="match status" value="2"/>
</dbReference>
<dbReference type="FunFam" id="2.20.28.290:FF:000001">
    <property type="entry name" value="Leucine--tRNA ligase"/>
    <property type="match status" value="1"/>
</dbReference>
<dbReference type="FunFam" id="3.10.20.590:FF:000001">
    <property type="entry name" value="Leucine--tRNA ligase"/>
    <property type="match status" value="1"/>
</dbReference>
<dbReference type="FunFam" id="3.40.50.620:FF:000003">
    <property type="entry name" value="Leucine--tRNA ligase"/>
    <property type="match status" value="1"/>
</dbReference>
<dbReference type="FunFam" id="3.40.50.620:FF:000124">
    <property type="entry name" value="Leucine--tRNA ligase"/>
    <property type="match status" value="1"/>
</dbReference>
<dbReference type="Gene3D" id="2.20.28.290">
    <property type="match status" value="1"/>
</dbReference>
<dbReference type="Gene3D" id="3.10.20.590">
    <property type="match status" value="1"/>
</dbReference>
<dbReference type="Gene3D" id="3.40.50.620">
    <property type="entry name" value="HUPs"/>
    <property type="match status" value="2"/>
</dbReference>
<dbReference type="Gene3D" id="1.10.730.10">
    <property type="entry name" value="Isoleucyl-tRNA Synthetase, Domain 1"/>
    <property type="match status" value="1"/>
</dbReference>
<dbReference type="HAMAP" id="MF_00049_B">
    <property type="entry name" value="Leu_tRNA_synth_B"/>
    <property type="match status" value="1"/>
</dbReference>
<dbReference type="InterPro" id="IPR001412">
    <property type="entry name" value="aa-tRNA-synth_I_CS"/>
</dbReference>
<dbReference type="InterPro" id="IPR002300">
    <property type="entry name" value="aa-tRNA-synth_Ia"/>
</dbReference>
<dbReference type="InterPro" id="IPR002302">
    <property type="entry name" value="Leu-tRNA-ligase"/>
</dbReference>
<dbReference type="InterPro" id="IPR025709">
    <property type="entry name" value="Leu_tRNA-synth_edit"/>
</dbReference>
<dbReference type="InterPro" id="IPR013155">
    <property type="entry name" value="M/V/L/I-tRNA-synth_anticd-bd"/>
</dbReference>
<dbReference type="InterPro" id="IPR015413">
    <property type="entry name" value="Methionyl/Leucyl_tRNA_Synth"/>
</dbReference>
<dbReference type="InterPro" id="IPR014729">
    <property type="entry name" value="Rossmann-like_a/b/a_fold"/>
</dbReference>
<dbReference type="InterPro" id="IPR009080">
    <property type="entry name" value="tRNAsynth_Ia_anticodon-bd"/>
</dbReference>
<dbReference type="InterPro" id="IPR009008">
    <property type="entry name" value="Val/Leu/Ile-tRNA-synth_edit"/>
</dbReference>
<dbReference type="NCBIfam" id="TIGR00396">
    <property type="entry name" value="leuS_bact"/>
    <property type="match status" value="1"/>
</dbReference>
<dbReference type="PANTHER" id="PTHR43740:SF2">
    <property type="entry name" value="LEUCINE--TRNA LIGASE, MITOCHONDRIAL"/>
    <property type="match status" value="1"/>
</dbReference>
<dbReference type="PANTHER" id="PTHR43740">
    <property type="entry name" value="LEUCYL-TRNA SYNTHETASE"/>
    <property type="match status" value="1"/>
</dbReference>
<dbReference type="Pfam" id="PF08264">
    <property type="entry name" value="Anticodon_1"/>
    <property type="match status" value="1"/>
</dbReference>
<dbReference type="Pfam" id="PF00133">
    <property type="entry name" value="tRNA-synt_1"/>
    <property type="match status" value="2"/>
</dbReference>
<dbReference type="Pfam" id="PF13603">
    <property type="entry name" value="tRNA-synt_1_2"/>
    <property type="match status" value="1"/>
</dbReference>
<dbReference type="Pfam" id="PF09334">
    <property type="entry name" value="tRNA-synt_1g"/>
    <property type="match status" value="1"/>
</dbReference>
<dbReference type="PRINTS" id="PR00985">
    <property type="entry name" value="TRNASYNTHLEU"/>
</dbReference>
<dbReference type="SUPFAM" id="SSF47323">
    <property type="entry name" value="Anticodon-binding domain of a subclass of class I aminoacyl-tRNA synthetases"/>
    <property type="match status" value="1"/>
</dbReference>
<dbReference type="SUPFAM" id="SSF52374">
    <property type="entry name" value="Nucleotidylyl transferase"/>
    <property type="match status" value="1"/>
</dbReference>
<dbReference type="SUPFAM" id="SSF50677">
    <property type="entry name" value="ValRS/IleRS/LeuRS editing domain"/>
    <property type="match status" value="1"/>
</dbReference>
<dbReference type="PROSITE" id="PS00178">
    <property type="entry name" value="AA_TRNA_LIGASE_I"/>
    <property type="match status" value="1"/>
</dbReference>
<accession>B1IYG6</accession>
<organism>
    <name type="scientific">Escherichia coli (strain ATCC 8739 / DSM 1576 / NBRC 3972 / NCIMB 8545 / WDCM 00012 / Crooks)</name>
    <dbReference type="NCBI Taxonomy" id="481805"/>
    <lineage>
        <taxon>Bacteria</taxon>
        <taxon>Pseudomonadati</taxon>
        <taxon>Pseudomonadota</taxon>
        <taxon>Gammaproteobacteria</taxon>
        <taxon>Enterobacterales</taxon>
        <taxon>Enterobacteriaceae</taxon>
        <taxon>Escherichia</taxon>
    </lineage>
</organism>
<name>SYL_ECOLC</name>
<sequence>MQEQYRPEEIESKVQLHWDEKRTFEVTEDESKEKYYCLSMLPYPSGRLHMGHVRNYTIGDVIARYQRMLGKNVLQPIGWDAFGLPAEGAAVKNNTAPAPWTYDNIAYMKNQLKMLGFGYDWSRELATCTPEYYRWEQKFFTELYKKGLVYKKTSAVNWCPNDQTVLANEQVIDGCCWRCDTKVERKEIPQWFIKITAYADELLNDLDKLDHWPDTVKTMQRNWIGRSEGVEITFNVNDYDNTLTVYTTRPDTFMGCTYLAVAAGHPLAQKAAENNPELAAFIDECRNTKVAEAEMATMEKKGVDTGFKAVHPLTGEEIPVWAANFVLMEYGTGAVMAVPGHDQRDYEFASKYGLNIKPVILAADGSEPDLSQQALTEKGVLFNSGEFNGLDHEAAFNAIADKLTAMGVGERKVNYRLRDWGVSRQRYWGAPIPMVTLEDGTVMPTPDDQLPVILPEDVVMDGITSPIKADPEWAKTTVNGMPALRETDTFDTFMESSWYYARYTCPQYKEGMLDSEAANYWLPVDIYIGGIEHAIMHLLYFRFFHKLMRDAGMVNSDEPAKQLLCQGMVLADAFYYVGENGERNWVSPVDAIVERDEKGRIVKAKDAAGHELVYTGMSKMSKSKNNGIDPQVMVERYGADTVRLFMMFASPADMTLEWQESGVEGANRFLKRIWKLVYEHTAKGDVAALNVDALTEDQKALRRDVHKTIAKVTDDIGRRQTFNTAIAAIMELMNKLAKAPTDGEQDRALMQEALLAVVRMLNPFTPHICFTLWQELKGEGDIDNAPWPVADEKAMVEDSTLVVVQVNGKVRAKITVPVDATEEQVRERAGQEHLVAKYLDGVTVRKVIYVPGKLLNLVVG</sequence>